<comment type="function">
    <text evidence="1">Transfers and isomerizes the ribose moiety from AdoMet to the 7-aminomethyl group of 7-deazaguanine (preQ1-tRNA) to give epoxyqueuosine (oQ-tRNA).</text>
</comment>
<comment type="catalytic activity">
    <reaction evidence="1">
        <text>7-aminomethyl-7-carbaguanosine(34) in tRNA + S-adenosyl-L-methionine = epoxyqueuosine(34) in tRNA + adenine + L-methionine + 2 H(+)</text>
        <dbReference type="Rhea" id="RHEA:32155"/>
        <dbReference type="Rhea" id="RHEA-COMP:10342"/>
        <dbReference type="Rhea" id="RHEA-COMP:18582"/>
        <dbReference type="ChEBI" id="CHEBI:15378"/>
        <dbReference type="ChEBI" id="CHEBI:16708"/>
        <dbReference type="ChEBI" id="CHEBI:57844"/>
        <dbReference type="ChEBI" id="CHEBI:59789"/>
        <dbReference type="ChEBI" id="CHEBI:82833"/>
        <dbReference type="ChEBI" id="CHEBI:194443"/>
        <dbReference type="EC" id="2.4.99.17"/>
    </reaction>
</comment>
<comment type="pathway">
    <text evidence="1">tRNA modification; tRNA-queuosine biosynthesis.</text>
</comment>
<comment type="subunit">
    <text evidence="1">Monomer.</text>
</comment>
<comment type="subcellular location">
    <subcellularLocation>
        <location evidence="1">Cytoplasm</location>
    </subcellularLocation>
</comment>
<comment type="similarity">
    <text evidence="1">Belongs to the QueA family.</text>
</comment>
<accession>Q7VG37</accession>
<dbReference type="EC" id="2.4.99.17" evidence="1"/>
<dbReference type="EMBL" id="AE017125">
    <property type="protein sequence ID" value="AAP78084.1"/>
    <property type="molecule type" value="Genomic_DNA"/>
</dbReference>
<dbReference type="RefSeq" id="WP_011116327.1">
    <property type="nucleotide sequence ID" value="NC_004917.1"/>
</dbReference>
<dbReference type="SMR" id="Q7VG37"/>
<dbReference type="STRING" id="235279.HH_1487"/>
<dbReference type="KEGG" id="hhe:HH_1487"/>
<dbReference type="eggNOG" id="COG0809">
    <property type="taxonomic scope" value="Bacteria"/>
</dbReference>
<dbReference type="HOGENOM" id="CLU_039110_1_0_7"/>
<dbReference type="OrthoDB" id="9805933at2"/>
<dbReference type="UniPathway" id="UPA00392"/>
<dbReference type="Proteomes" id="UP000002495">
    <property type="component" value="Chromosome"/>
</dbReference>
<dbReference type="GO" id="GO:0005737">
    <property type="term" value="C:cytoplasm"/>
    <property type="evidence" value="ECO:0007669"/>
    <property type="project" value="UniProtKB-SubCell"/>
</dbReference>
<dbReference type="GO" id="GO:0051075">
    <property type="term" value="F:S-adenosylmethionine:tRNA ribosyltransferase-isomerase activity"/>
    <property type="evidence" value="ECO:0007669"/>
    <property type="project" value="UniProtKB-EC"/>
</dbReference>
<dbReference type="GO" id="GO:0008616">
    <property type="term" value="P:queuosine biosynthetic process"/>
    <property type="evidence" value="ECO:0007669"/>
    <property type="project" value="UniProtKB-UniRule"/>
</dbReference>
<dbReference type="GO" id="GO:0002099">
    <property type="term" value="P:tRNA wobble guanine modification"/>
    <property type="evidence" value="ECO:0007669"/>
    <property type="project" value="TreeGrafter"/>
</dbReference>
<dbReference type="Gene3D" id="2.40.10.240">
    <property type="entry name" value="QueA-like"/>
    <property type="match status" value="1"/>
</dbReference>
<dbReference type="Gene3D" id="3.40.1780.10">
    <property type="entry name" value="QueA-like"/>
    <property type="match status" value="1"/>
</dbReference>
<dbReference type="HAMAP" id="MF_00113">
    <property type="entry name" value="QueA"/>
    <property type="match status" value="1"/>
</dbReference>
<dbReference type="InterPro" id="IPR003699">
    <property type="entry name" value="QueA"/>
</dbReference>
<dbReference type="InterPro" id="IPR042118">
    <property type="entry name" value="QueA_dom1"/>
</dbReference>
<dbReference type="InterPro" id="IPR042119">
    <property type="entry name" value="QueA_dom2"/>
</dbReference>
<dbReference type="InterPro" id="IPR036100">
    <property type="entry name" value="QueA_sf"/>
</dbReference>
<dbReference type="NCBIfam" id="NF001140">
    <property type="entry name" value="PRK00147.1"/>
    <property type="match status" value="1"/>
</dbReference>
<dbReference type="NCBIfam" id="TIGR00113">
    <property type="entry name" value="queA"/>
    <property type="match status" value="1"/>
</dbReference>
<dbReference type="PANTHER" id="PTHR30307">
    <property type="entry name" value="S-ADENOSYLMETHIONINE:TRNA RIBOSYLTRANSFERASE-ISOMERASE"/>
    <property type="match status" value="1"/>
</dbReference>
<dbReference type="PANTHER" id="PTHR30307:SF0">
    <property type="entry name" value="S-ADENOSYLMETHIONINE:TRNA RIBOSYLTRANSFERASE-ISOMERASE"/>
    <property type="match status" value="1"/>
</dbReference>
<dbReference type="Pfam" id="PF02547">
    <property type="entry name" value="Queuosine_synth"/>
    <property type="match status" value="1"/>
</dbReference>
<dbReference type="SUPFAM" id="SSF111337">
    <property type="entry name" value="QueA-like"/>
    <property type="match status" value="1"/>
</dbReference>
<name>QUEA_HELHP</name>
<gene>
    <name evidence="1" type="primary">queA</name>
    <name type="ordered locus">HH_1487</name>
</gene>
<keyword id="KW-0963">Cytoplasm</keyword>
<keyword id="KW-0671">Queuosine biosynthesis</keyword>
<keyword id="KW-1185">Reference proteome</keyword>
<keyword id="KW-0949">S-adenosyl-L-methionine</keyword>
<keyword id="KW-0808">Transferase</keyword>
<proteinExistence type="inferred from homology"/>
<sequence length="365" mass="41827">MTYFDPKIQESDFALSSYDYTLPFSAIAQNPANPRERAKLLIYQRDSGRIIHSDFYHFCDFVPKDTLLVFNDTRVIKARIYAHKLDCNTQKLSDKTFEIFYHKPLQSTSSAIPLFLVQIKGRVKCGDKLLINTDSTNPFLIAQVQECLDNGLRVVSFMQNEHALEYIQVLDMLEKYGHTPLPPYIKREDSCQDAHFYQSVFSKQLGSIAAPTASLHFSKESIESIKAQFETCFLTLHIGAGTFMNVESADIRHHLIHKEFFSLSPQSAAAIQNAHKVLCIGTTSARCVEYYARYKILQGECDIFLYPSKSFKRVDYLLTNFHLPKSTLMMLVSAMVGREKCLELYKLALEKGYRFYSYGDGMLIL</sequence>
<organism>
    <name type="scientific">Helicobacter hepaticus (strain ATCC 51449 / 3B1)</name>
    <dbReference type="NCBI Taxonomy" id="235279"/>
    <lineage>
        <taxon>Bacteria</taxon>
        <taxon>Pseudomonadati</taxon>
        <taxon>Campylobacterota</taxon>
        <taxon>Epsilonproteobacteria</taxon>
        <taxon>Campylobacterales</taxon>
        <taxon>Helicobacteraceae</taxon>
        <taxon>Helicobacter</taxon>
    </lineage>
</organism>
<reference key="1">
    <citation type="journal article" date="2003" name="Proc. Natl. Acad. Sci. U.S.A.">
        <title>The complete genome sequence of the carcinogenic bacterium Helicobacter hepaticus.</title>
        <authorList>
            <person name="Suerbaum S."/>
            <person name="Josenhans C."/>
            <person name="Sterzenbach T."/>
            <person name="Drescher B."/>
            <person name="Brandt P."/>
            <person name="Bell M."/>
            <person name="Droege M."/>
            <person name="Fartmann B."/>
            <person name="Fischer H.-P."/>
            <person name="Ge Z."/>
            <person name="Hoerster A."/>
            <person name="Holland R."/>
            <person name="Klein K."/>
            <person name="Koenig J."/>
            <person name="Macko L."/>
            <person name="Mendz G.L."/>
            <person name="Nyakatura G."/>
            <person name="Schauer D.B."/>
            <person name="Shen Z."/>
            <person name="Weber J."/>
            <person name="Frosch M."/>
            <person name="Fox J.G."/>
        </authorList>
    </citation>
    <scope>NUCLEOTIDE SEQUENCE [LARGE SCALE GENOMIC DNA]</scope>
    <source>
        <strain>ATCC 51449 / 3B1</strain>
    </source>
</reference>
<evidence type="ECO:0000255" key="1">
    <source>
        <dbReference type="HAMAP-Rule" id="MF_00113"/>
    </source>
</evidence>
<feature type="chain" id="PRO_0000165408" description="S-adenosylmethionine:tRNA ribosyltransferase-isomerase">
    <location>
        <begin position="1"/>
        <end position="365"/>
    </location>
</feature>
<protein>
    <recommendedName>
        <fullName evidence="1">S-adenosylmethionine:tRNA ribosyltransferase-isomerase</fullName>
        <ecNumber evidence="1">2.4.99.17</ecNumber>
    </recommendedName>
    <alternativeName>
        <fullName evidence="1">Queuosine biosynthesis protein QueA</fullName>
    </alternativeName>
</protein>